<evidence type="ECO:0000255" key="1">
    <source>
        <dbReference type="HAMAP-Rule" id="MF_01710"/>
    </source>
</evidence>
<accession>Q6KHL2</accession>
<organism>
    <name type="scientific">Mycoplasma mobile (strain ATCC 43663 / 163K / NCTC 11711)</name>
    <name type="common">Mesomycoplasma mobile</name>
    <dbReference type="NCBI Taxonomy" id="267748"/>
    <lineage>
        <taxon>Bacteria</taxon>
        <taxon>Bacillati</taxon>
        <taxon>Mycoplasmatota</taxon>
        <taxon>Mycoplasmoidales</taxon>
        <taxon>Metamycoplasmataceae</taxon>
        <taxon>Mesomycoplasma</taxon>
    </lineage>
</organism>
<dbReference type="EC" id="7.-.-.-" evidence="1"/>
<dbReference type="EMBL" id="AE017308">
    <property type="protein sequence ID" value="AAT27918.1"/>
    <property type="molecule type" value="Genomic_DNA"/>
</dbReference>
<dbReference type="RefSeq" id="WP_011264952.1">
    <property type="nucleotide sequence ID" value="NC_006908.1"/>
</dbReference>
<dbReference type="SMR" id="Q6KHL2"/>
<dbReference type="STRING" id="267748.MMOB4320"/>
<dbReference type="KEGG" id="mmo:MMOB4320"/>
<dbReference type="eggNOG" id="COG1122">
    <property type="taxonomic scope" value="Bacteria"/>
</dbReference>
<dbReference type="HOGENOM" id="CLU_000604_1_22_14"/>
<dbReference type="OrthoDB" id="9784332at2"/>
<dbReference type="Proteomes" id="UP000009072">
    <property type="component" value="Chromosome"/>
</dbReference>
<dbReference type="GO" id="GO:0043190">
    <property type="term" value="C:ATP-binding cassette (ABC) transporter complex"/>
    <property type="evidence" value="ECO:0007669"/>
    <property type="project" value="TreeGrafter"/>
</dbReference>
<dbReference type="GO" id="GO:0005524">
    <property type="term" value="F:ATP binding"/>
    <property type="evidence" value="ECO:0007669"/>
    <property type="project" value="UniProtKB-KW"/>
</dbReference>
<dbReference type="GO" id="GO:0016887">
    <property type="term" value="F:ATP hydrolysis activity"/>
    <property type="evidence" value="ECO:0007669"/>
    <property type="project" value="InterPro"/>
</dbReference>
<dbReference type="GO" id="GO:0042626">
    <property type="term" value="F:ATPase-coupled transmembrane transporter activity"/>
    <property type="evidence" value="ECO:0007669"/>
    <property type="project" value="TreeGrafter"/>
</dbReference>
<dbReference type="CDD" id="cd03225">
    <property type="entry name" value="ABC_cobalt_CbiO_domain1"/>
    <property type="match status" value="1"/>
</dbReference>
<dbReference type="FunFam" id="3.40.50.300:FF:000224">
    <property type="entry name" value="Energy-coupling factor transporter ATP-binding protein EcfA"/>
    <property type="match status" value="1"/>
</dbReference>
<dbReference type="Gene3D" id="3.40.50.300">
    <property type="entry name" value="P-loop containing nucleotide triphosphate hydrolases"/>
    <property type="match status" value="1"/>
</dbReference>
<dbReference type="InterPro" id="IPR003593">
    <property type="entry name" value="AAA+_ATPase"/>
</dbReference>
<dbReference type="InterPro" id="IPR003439">
    <property type="entry name" value="ABC_transporter-like_ATP-bd"/>
</dbReference>
<dbReference type="InterPro" id="IPR017871">
    <property type="entry name" value="ABC_transporter-like_CS"/>
</dbReference>
<dbReference type="InterPro" id="IPR015856">
    <property type="entry name" value="ABC_transpr_CbiO/EcfA_su"/>
</dbReference>
<dbReference type="InterPro" id="IPR050095">
    <property type="entry name" value="ECF_ABC_transporter_ATP-bd"/>
</dbReference>
<dbReference type="InterPro" id="IPR030946">
    <property type="entry name" value="EcfA2"/>
</dbReference>
<dbReference type="InterPro" id="IPR027417">
    <property type="entry name" value="P-loop_NTPase"/>
</dbReference>
<dbReference type="NCBIfam" id="TIGR04521">
    <property type="entry name" value="ECF_ATPase_2"/>
    <property type="match status" value="1"/>
</dbReference>
<dbReference type="NCBIfam" id="NF010170">
    <property type="entry name" value="PRK13651.1"/>
    <property type="match status" value="1"/>
</dbReference>
<dbReference type="PANTHER" id="PTHR43553:SF27">
    <property type="entry name" value="ENERGY-COUPLING FACTOR TRANSPORTER ATP-BINDING PROTEIN ECFA2"/>
    <property type="match status" value="1"/>
</dbReference>
<dbReference type="PANTHER" id="PTHR43553">
    <property type="entry name" value="HEAVY METAL TRANSPORTER"/>
    <property type="match status" value="1"/>
</dbReference>
<dbReference type="Pfam" id="PF00005">
    <property type="entry name" value="ABC_tran"/>
    <property type="match status" value="1"/>
</dbReference>
<dbReference type="SMART" id="SM00382">
    <property type="entry name" value="AAA"/>
    <property type="match status" value="1"/>
</dbReference>
<dbReference type="SUPFAM" id="SSF52540">
    <property type="entry name" value="P-loop containing nucleoside triphosphate hydrolases"/>
    <property type="match status" value="1"/>
</dbReference>
<dbReference type="PROSITE" id="PS00211">
    <property type="entry name" value="ABC_TRANSPORTER_1"/>
    <property type="match status" value="1"/>
</dbReference>
<dbReference type="PROSITE" id="PS50893">
    <property type="entry name" value="ABC_TRANSPORTER_2"/>
    <property type="match status" value="1"/>
</dbReference>
<dbReference type="PROSITE" id="PS51246">
    <property type="entry name" value="CBIO"/>
    <property type="match status" value="1"/>
</dbReference>
<name>ECFA2_MYCM1</name>
<proteinExistence type="inferred from homology"/>
<gene>
    <name evidence="1" type="primary">ecfA2</name>
    <name type="synonym">cbiO2</name>
    <name type="ordered locus">MMOB4320</name>
</gene>
<protein>
    <recommendedName>
        <fullName evidence="1">Energy-coupling factor transporter ATP-binding protein EcfA2</fullName>
        <shortName evidence="1">ECF transporter A component EcfA2</shortName>
        <ecNumber evidence="1">7.-.-.-</ecNumber>
    </recommendedName>
</protein>
<comment type="function">
    <text evidence="1">ATP-binding (A) component of a common energy-coupling factor (ECF) ABC-transporter complex. Unlike classic ABC transporters this ECF transporter provides the energy necessary to transport a number of different substrates.</text>
</comment>
<comment type="subunit">
    <text evidence="1">Forms a stable energy-coupling factor (ECF) transporter complex composed of 2 membrane-embedded substrate-binding proteins (S component), 2 ATP-binding proteins (A component) and 2 transmembrane proteins (T component).</text>
</comment>
<comment type="subcellular location">
    <subcellularLocation>
        <location evidence="1">Cell membrane</location>
        <topology evidence="1">Peripheral membrane protein</topology>
    </subcellularLocation>
</comment>
<comment type="similarity">
    <text evidence="1">Belongs to the ABC transporter superfamily. Energy-coupling factor EcfA family.</text>
</comment>
<sequence>MQIEVKNISKVFEPKSPIEFTALKGVSLSFEQGEFISIIGPTGSGKTTFIEHLNALNLPSIGSIVIKGKFKDQKDKKNPVLIESEVILQKTKRKIKQIKEIRRQIGIVFQFAEYQLFESTIEKDIAFGPISLGISKEEAYKRAKKYISIVGLPENYLQRSPFELSGGQKRRVALAGILAMDPDFLIFDEPTAGLDPQGSKEILEIFGKLNSEGKTVIIVTHNLDHALEWTNRTIFFNDGFVIKDGKTYDVLEDVDFLRENEMEPPKLLVLKKLLQDKGINLSKVRSIEDFAREINQYLETKNKTKENN</sequence>
<feature type="chain" id="PRO_0000092040" description="Energy-coupling factor transporter ATP-binding protein EcfA2">
    <location>
        <begin position="1"/>
        <end position="308"/>
    </location>
</feature>
<feature type="domain" description="ABC transporter" evidence="1">
    <location>
        <begin position="3"/>
        <end position="263"/>
    </location>
</feature>
<feature type="binding site" evidence="1">
    <location>
        <begin position="40"/>
        <end position="47"/>
    </location>
    <ligand>
        <name>ATP</name>
        <dbReference type="ChEBI" id="CHEBI:30616"/>
    </ligand>
</feature>
<keyword id="KW-0067">ATP-binding</keyword>
<keyword id="KW-1003">Cell membrane</keyword>
<keyword id="KW-0472">Membrane</keyword>
<keyword id="KW-0547">Nucleotide-binding</keyword>
<keyword id="KW-1185">Reference proteome</keyword>
<keyword id="KW-1278">Translocase</keyword>
<keyword id="KW-0813">Transport</keyword>
<reference key="1">
    <citation type="journal article" date="2004" name="Genome Res.">
        <title>The complete genome and proteome of Mycoplasma mobile.</title>
        <authorList>
            <person name="Jaffe J.D."/>
            <person name="Stange-Thomann N."/>
            <person name="Smith C."/>
            <person name="DeCaprio D."/>
            <person name="Fisher S."/>
            <person name="Butler J."/>
            <person name="Calvo S."/>
            <person name="Elkins T."/>
            <person name="FitzGerald M.G."/>
            <person name="Hafez N."/>
            <person name="Kodira C.D."/>
            <person name="Major J."/>
            <person name="Wang S."/>
            <person name="Wilkinson J."/>
            <person name="Nicol R."/>
            <person name="Nusbaum C."/>
            <person name="Birren B."/>
            <person name="Berg H.C."/>
            <person name="Church G.M."/>
        </authorList>
    </citation>
    <scope>NUCLEOTIDE SEQUENCE [LARGE SCALE GENOMIC DNA]</scope>
    <source>
        <strain>ATCC 43663 / NCTC 11711 / 163 K</strain>
    </source>
</reference>